<evidence type="ECO:0000255" key="1">
    <source>
        <dbReference type="HAMAP-Rule" id="MF_00739"/>
    </source>
</evidence>
<comment type="catalytic activity">
    <reaction evidence="1">
        <text>urea + 2 H2O + H(+) = hydrogencarbonate + 2 NH4(+)</text>
        <dbReference type="Rhea" id="RHEA:20557"/>
        <dbReference type="ChEBI" id="CHEBI:15377"/>
        <dbReference type="ChEBI" id="CHEBI:15378"/>
        <dbReference type="ChEBI" id="CHEBI:16199"/>
        <dbReference type="ChEBI" id="CHEBI:17544"/>
        <dbReference type="ChEBI" id="CHEBI:28938"/>
        <dbReference type="EC" id="3.5.1.5"/>
    </reaction>
</comment>
<comment type="pathway">
    <text evidence="1">Nitrogen metabolism; urea degradation; CO(2) and NH(3) from urea (urease route): step 1/1.</text>
</comment>
<comment type="subunit">
    <text evidence="1">Heterotrimer of UreA (gamma), UreB (beta) and UreC (alpha) subunits. Three heterotrimers associate to form the active enzyme.</text>
</comment>
<comment type="subcellular location">
    <subcellularLocation>
        <location evidence="1">Cytoplasm</location>
    </subcellularLocation>
</comment>
<comment type="similarity">
    <text evidence="1">Belongs to the urease gamma subunit family.</text>
</comment>
<gene>
    <name evidence="1" type="primary">ureA</name>
    <name type="ordered locus">SAV2288</name>
</gene>
<reference key="1">
    <citation type="journal article" date="2001" name="Lancet">
        <title>Whole genome sequencing of meticillin-resistant Staphylococcus aureus.</title>
        <authorList>
            <person name="Kuroda M."/>
            <person name="Ohta T."/>
            <person name="Uchiyama I."/>
            <person name="Baba T."/>
            <person name="Yuzawa H."/>
            <person name="Kobayashi I."/>
            <person name="Cui L."/>
            <person name="Oguchi A."/>
            <person name="Aoki K."/>
            <person name="Nagai Y."/>
            <person name="Lian J.-Q."/>
            <person name="Ito T."/>
            <person name="Kanamori M."/>
            <person name="Matsumaru H."/>
            <person name="Maruyama A."/>
            <person name="Murakami H."/>
            <person name="Hosoyama A."/>
            <person name="Mizutani-Ui Y."/>
            <person name="Takahashi N.K."/>
            <person name="Sawano T."/>
            <person name="Inoue R."/>
            <person name="Kaito C."/>
            <person name="Sekimizu K."/>
            <person name="Hirakawa H."/>
            <person name="Kuhara S."/>
            <person name="Goto S."/>
            <person name="Yabuzaki J."/>
            <person name="Kanehisa M."/>
            <person name="Yamashita A."/>
            <person name="Oshima K."/>
            <person name="Furuya K."/>
            <person name="Yoshino C."/>
            <person name="Shiba T."/>
            <person name="Hattori M."/>
            <person name="Ogasawara N."/>
            <person name="Hayashi H."/>
            <person name="Hiramatsu K."/>
        </authorList>
    </citation>
    <scope>NUCLEOTIDE SEQUENCE [LARGE SCALE GENOMIC DNA]</scope>
    <source>
        <strain>Mu50 / ATCC 700699</strain>
    </source>
</reference>
<feature type="chain" id="PRO_0000098039" description="Urease subunit gamma">
    <location>
        <begin position="1"/>
        <end position="100"/>
    </location>
</feature>
<dbReference type="EC" id="3.5.1.5" evidence="1"/>
<dbReference type="EMBL" id="BA000017">
    <property type="protein sequence ID" value="BAB58450.1"/>
    <property type="molecule type" value="Genomic_DNA"/>
</dbReference>
<dbReference type="RefSeq" id="WP_000545928.1">
    <property type="nucleotide sequence ID" value="NC_002758.2"/>
</dbReference>
<dbReference type="SMR" id="P67718"/>
<dbReference type="KEGG" id="sav:SAV2288"/>
<dbReference type="HOGENOM" id="CLU_145825_1_0_9"/>
<dbReference type="PhylomeDB" id="P67718"/>
<dbReference type="UniPathway" id="UPA00258">
    <property type="reaction ID" value="UER00370"/>
</dbReference>
<dbReference type="Proteomes" id="UP000002481">
    <property type="component" value="Chromosome"/>
</dbReference>
<dbReference type="GO" id="GO:0005737">
    <property type="term" value="C:cytoplasm"/>
    <property type="evidence" value="ECO:0007669"/>
    <property type="project" value="UniProtKB-SubCell"/>
</dbReference>
<dbReference type="GO" id="GO:0016151">
    <property type="term" value="F:nickel cation binding"/>
    <property type="evidence" value="ECO:0007669"/>
    <property type="project" value="InterPro"/>
</dbReference>
<dbReference type="GO" id="GO:0009039">
    <property type="term" value="F:urease activity"/>
    <property type="evidence" value="ECO:0007669"/>
    <property type="project" value="UniProtKB-UniRule"/>
</dbReference>
<dbReference type="GO" id="GO:0043419">
    <property type="term" value="P:urea catabolic process"/>
    <property type="evidence" value="ECO:0007669"/>
    <property type="project" value="UniProtKB-UniRule"/>
</dbReference>
<dbReference type="CDD" id="cd00390">
    <property type="entry name" value="Urease_gamma"/>
    <property type="match status" value="1"/>
</dbReference>
<dbReference type="Gene3D" id="3.30.280.10">
    <property type="entry name" value="Urease, gamma-like subunit"/>
    <property type="match status" value="1"/>
</dbReference>
<dbReference type="HAMAP" id="MF_00739">
    <property type="entry name" value="Urease_gamma"/>
    <property type="match status" value="1"/>
</dbReference>
<dbReference type="InterPro" id="IPR012010">
    <property type="entry name" value="Urease_gamma"/>
</dbReference>
<dbReference type="InterPro" id="IPR002026">
    <property type="entry name" value="Urease_gamma/gamma-beta_su"/>
</dbReference>
<dbReference type="InterPro" id="IPR036463">
    <property type="entry name" value="Urease_gamma_sf"/>
</dbReference>
<dbReference type="InterPro" id="IPR050069">
    <property type="entry name" value="Urease_subunit"/>
</dbReference>
<dbReference type="NCBIfam" id="NF009712">
    <property type="entry name" value="PRK13241.1"/>
    <property type="match status" value="1"/>
</dbReference>
<dbReference type="NCBIfam" id="TIGR00193">
    <property type="entry name" value="urease_gam"/>
    <property type="match status" value="1"/>
</dbReference>
<dbReference type="PANTHER" id="PTHR33569">
    <property type="entry name" value="UREASE"/>
    <property type="match status" value="1"/>
</dbReference>
<dbReference type="PANTHER" id="PTHR33569:SF1">
    <property type="entry name" value="UREASE"/>
    <property type="match status" value="1"/>
</dbReference>
<dbReference type="Pfam" id="PF00547">
    <property type="entry name" value="Urease_gamma"/>
    <property type="match status" value="1"/>
</dbReference>
<dbReference type="PIRSF" id="PIRSF001223">
    <property type="entry name" value="Urease_gamma"/>
    <property type="match status" value="1"/>
</dbReference>
<dbReference type="SUPFAM" id="SSF54111">
    <property type="entry name" value="Urease, gamma-subunit"/>
    <property type="match status" value="1"/>
</dbReference>
<organism>
    <name type="scientific">Staphylococcus aureus (strain Mu50 / ATCC 700699)</name>
    <dbReference type="NCBI Taxonomy" id="158878"/>
    <lineage>
        <taxon>Bacteria</taxon>
        <taxon>Bacillati</taxon>
        <taxon>Bacillota</taxon>
        <taxon>Bacilli</taxon>
        <taxon>Bacillales</taxon>
        <taxon>Staphylococcaceae</taxon>
        <taxon>Staphylococcus</taxon>
    </lineage>
</organism>
<name>URE3_STAAM</name>
<proteinExistence type="inferred from homology"/>
<protein>
    <recommendedName>
        <fullName evidence="1">Urease subunit gamma</fullName>
        <ecNumber evidence="1">3.5.1.5</ecNumber>
    </recommendedName>
    <alternativeName>
        <fullName evidence="1">Urea amidohydrolase subunit gamma</fullName>
    </alternativeName>
</protein>
<keyword id="KW-0963">Cytoplasm</keyword>
<keyword id="KW-0378">Hydrolase</keyword>
<accession>P67718</accession>
<accession>Q99RY4</accession>
<sequence length="100" mass="11273">MHFTQREQDKLMIVVAAEVARRRKARGLKLNHPEALALISDELLEGARDGKTVAELMSYGRQILNKEDVMDGVEHMITDIEIEATFPDGTKLITVHHPIV</sequence>